<protein>
    <recommendedName>
        <fullName evidence="1">tRNA dimethylallyltransferase</fullName>
        <ecNumber evidence="1">2.5.1.75</ecNumber>
    </recommendedName>
    <alternativeName>
        <fullName evidence="1">Dimethylallyl diphosphate:tRNA dimethylallyltransferase</fullName>
        <shortName evidence="1">DMAPP:tRNA dimethylallyltransferase</shortName>
        <shortName evidence="1">DMATase</shortName>
    </alternativeName>
    <alternativeName>
        <fullName evidence="1">Isopentenyl-diphosphate:tRNA isopentenyltransferase</fullName>
        <shortName evidence="1">IPP transferase</shortName>
        <shortName evidence="1">IPPT</shortName>
        <shortName evidence="1">IPTase</shortName>
    </alternativeName>
</protein>
<gene>
    <name evidence="1" type="primary">miaA</name>
    <name type="ordered locus">lp_1579</name>
</gene>
<reference key="1">
    <citation type="journal article" date="2003" name="Proc. Natl. Acad. Sci. U.S.A.">
        <title>Complete genome sequence of Lactobacillus plantarum WCFS1.</title>
        <authorList>
            <person name="Kleerebezem M."/>
            <person name="Boekhorst J."/>
            <person name="van Kranenburg R."/>
            <person name="Molenaar D."/>
            <person name="Kuipers O.P."/>
            <person name="Leer R."/>
            <person name="Tarchini R."/>
            <person name="Peters S.A."/>
            <person name="Sandbrink H.M."/>
            <person name="Fiers M.W.E.J."/>
            <person name="Stiekema W."/>
            <person name="Klein Lankhorst R.M."/>
            <person name="Bron P.A."/>
            <person name="Hoffer S.M."/>
            <person name="Nierop Groot M.N."/>
            <person name="Kerkhoven R."/>
            <person name="De Vries M."/>
            <person name="Ursing B."/>
            <person name="De Vos W.M."/>
            <person name="Siezen R.J."/>
        </authorList>
    </citation>
    <scope>NUCLEOTIDE SEQUENCE [LARGE SCALE GENOMIC DNA]</scope>
    <source>
        <strain>ATCC BAA-793 / NCIMB 8826 / WCFS1</strain>
    </source>
</reference>
<reference key="2">
    <citation type="journal article" date="2012" name="J. Bacteriol.">
        <title>Complete resequencing and reannotation of the Lactobacillus plantarum WCFS1 genome.</title>
        <authorList>
            <person name="Siezen R.J."/>
            <person name="Francke C."/>
            <person name="Renckens B."/>
            <person name="Boekhorst J."/>
            <person name="Wels M."/>
            <person name="Kleerebezem M."/>
            <person name="van Hijum S.A."/>
        </authorList>
    </citation>
    <scope>NUCLEOTIDE SEQUENCE [LARGE SCALE GENOMIC DNA]</scope>
    <scope>GENOME REANNOTATION</scope>
    <source>
        <strain>ATCC BAA-793 / NCIMB 8826 / WCFS1</strain>
    </source>
</reference>
<proteinExistence type="inferred from homology"/>
<feature type="chain" id="PRO_0000163930" description="tRNA dimethylallyltransferase">
    <location>
        <begin position="1"/>
        <end position="311"/>
    </location>
</feature>
<feature type="region of interest" description="Interaction with substrate tRNA" evidence="1">
    <location>
        <begin position="39"/>
        <end position="42"/>
    </location>
</feature>
<feature type="binding site" evidence="1">
    <location>
        <begin position="14"/>
        <end position="21"/>
    </location>
    <ligand>
        <name>ATP</name>
        <dbReference type="ChEBI" id="CHEBI:30616"/>
    </ligand>
</feature>
<feature type="binding site" evidence="1">
    <location>
        <begin position="16"/>
        <end position="21"/>
    </location>
    <ligand>
        <name>substrate</name>
    </ligand>
</feature>
<feature type="site" description="Interaction with substrate tRNA" evidence="1">
    <location>
        <position position="105"/>
    </location>
</feature>
<feature type="site" description="Interaction with substrate tRNA" evidence="1">
    <location>
        <position position="130"/>
    </location>
</feature>
<comment type="function">
    <text evidence="1">Catalyzes the transfer of a dimethylallyl group onto the adenine at position 37 in tRNAs that read codons beginning with uridine, leading to the formation of N6-(dimethylallyl)adenosine (i(6)A).</text>
</comment>
<comment type="catalytic activity">
    <reaction evidence="1">
        <text>adenosine(37) in tRNA + dimethylallyl diphosphate = N(6)-dimethylallyladenosine(37) in tRNA + diphosphate</text>
        <dbReference type="Rhea" id="RHEA:26482"/>
        <dbReference type="Rhea" id="RHEA-COMP:10162"/>
        <dbReference type="Rhea" id="RHEA-COMP:10375"/>
        <dbReference type="ChEBI" id="CHEBI:33019"/>
        <dbReference type="ChEBI" id="CHEBI:57623"/>
        <dbReference type="ChEBI" id="CHEBI:74411"/>
        <dbReference type="ChEBI" id="CHEBI:74415"/>
        <dbReference type="EC" id="2.5.1.75"/>
    </reaction>
</comment>
<comment type="cofactor">
    <cofactor evidence="1">
        <name>Mg(2+)</name>
        <dbReference type="ChEBI" id="CHEBI:18420"/>
    </cofactor>
</comment>
<comment type="subunit">
    <text evidence="1">Monomer.</text>
</comment>
<comment type="similarity">
    <text evidence="1">Belongs to the IPP transferase family.</text>
</comment>
<dbReference type="EC" id="2.5.1.75" evidence="1"/>
<dbReference type="EMBL" id="AL935263">
    <property type="protein sequence ID" value="CCC78896.1"/>
    <property type="molecule type" value="Genomic_DNA"/>
</dbReference>
<dbReference type="RefSeq" id="WP_003640331.1">
    <property type="nucleotide sequence ID" value="NC_004567.2"/>
</dbReference>
<dbReference type="RefSeq" id="YP_004889410.1">
    <property type="nucleotide sequence ID" value="NC_004567.2"/>
</dbReference>
<dbReference type="SMR" id="Q88WP5"/>
<dbReference type="STRING" id="220668.lp_1579"/>
<dbReference type="EnsemblBacteria" id="CCC78896">
    <property type="protein sequence ID" value="CCC78896"/>
    <property type="gene ID" value="lp_1579"/>
</dbReference>
<dbReference type="GeneID" id="77217997"/>
<dbReference type="KEGG" id="lpl:lp_1579"/>
<dbReference type="PATRIC" id="fig|220668.9.peg.1330"/>
<dbReference type="eggNOG" id="COG0324">
    <property type="taxonomic scope" value="Bacteria"/>
</dbReference>
<dbReference type="HOGENOM" id="CLU_032616_0_1_9"/>
<dbReference type="OrthoDB" id="9776390at2"/>
<dbReference type="PhylomeDB" id="Q88WP5"/>
<dbReference type="Proteomes" id="UP000000432">
    <property type="component" value="Chromosome"/>
</dbReference>
<dbReference type="GO" id="GO:0005524">
    <property type="term" value="F:ATP binding"/>
    <property type="evidence" value="ECO:0007669"/>
    <property type="project" value="UniProtKB-UniRule"/>
</dbReference>
<dbReference type="GO" id="GO:0052381">
    <property type="term" value="F:tRNA dimethylallyltransferase activity"/>
    <property type="evidence" value="ECO:0007669"/>
    <property type="project" value="UniProtKB-UniRule"/>
</dbReference>
<dbReference type="GO" id="GO:0006400">
    <property type="term" value="P:tRNA modification"/>
    <property type="evidence" value="ECO:0007669"/>
    <property type="project" value="TreeGrafter"/>
</dbReference>
<dbReference type="Gene3D" id="1.10.20.140">
    <property type="match status" value="1"/>
</dbReference>
<dbReference type="Gene3D" id="3.40.50.300">
    <property type="entry name" value="P-loop containing nucleotide triphosphate hydrolases"/>
    <property type="match status" value="1"/>
</dbReference>
<dbReference type="HAMAP" id="MF_00185">
    <property type="entry name" value="IPP_trans"/>
    <property type="match status" value="1"/>
</dbReference>
<dbReference type="InterPro" id="IPR039657">
    <property type="entry name" value="Dimethylallyltransferase"/>
</dbReference>
<dbReference type="InterPro" id="IPR018022">
    <property type="entry name" value="IPT"/>
</dbReference>
<dbReference type="InterPro" id="IPR027417">
    <property type="entry name" value="P-loop_NTPase"/>
</dbReference>
<dbReference type="NCBIfam" id="TIGR00174">
    <property type="entry name" value="miaA"/>
    <property type="match status" value="1"/>
</dbReference>
<dbReference type="PANTHER" id="PTHR11088">
    <property type="entry name" value="TRNA DIMETHYLALLYLTRANSFERASE"/>
    <property type="match status" value="1"/>
</dbReference>
<dbReference type="PANTHER" id="PTHR11088:SF60">
    <property type="entry name" value="TRNA DIMETHYLALLYLTRANSFERASE"/>
    <property type="match status" value="1"/>
</dbReference>
<dbReference type="Pfam" id="PF01715">
    <property type="entry name" value="IPPT"/>
    <property type="match status" value="1"/>
</dbReference>
<dbReference type="SUPFAM" id="SSF52540">
    <property type="entry name" value="P-loop containing nucleoside triphosphate hydrolases"/>
    <property type="match status" value="2"/>
</dbReference>
<sequence>MTTVTKHKVLLIAGPTAVGKTALSLALAKQLNGEIISGDSMQVYRHLDIGTAKIMPEEQAGIPHHLIDIKNIDQRFTVAEFVSRTTALIIDISARGKLPIIVGGTGFYLQSLLAGYQFGPADNEPDMAYRQAWFDRAAVEGSDVAWMALKQRDPQAATAIAPANLVRVVRALEYVHTTGQLFSEQADTHGDTLDAYTLCLTAERALLYTRINQRVDQMVAAGLEQEARWLFDQGGAMLPAGKGIGYHEWFPYFNGEQTRDESIAKIKQDSRRYAKRQLTWFRNKMSVDWINLLEHPELRASIDQRLASWLS</sequence>
<keyword id="KW-0067">ATP-binding</keyword>
<keyword id="KW-0460">Magnesium</keyword>
<keyword id="KW-0547">Nucleotide-binding</keyword>
<keyword id="KW-1185">Reference proteome</keyword>
<keyword id="KW-0808">Transferase</keyword>
<keyword id="KW-0819">tRNA processing</keyword>
<evidence type="ECO:0000255" key="1">
    <source>
        <dbReference type="HAMAP-Rule" id="MF_00185"/>
    </source>
</evidence>
<organism>
    <name type="scientific">Lactiplantibacillus plantarum (strain ATCC BAA-793 / NCIMB 8826 / WCFS1)</name>
    <name type="common">Lactobacillus plantarum</name>
    <dbReference type="NCBI Taxonomy" id="220668"/>
    <lineage>
        <taxon>Bacteria</taxon>
        <taxon>Bacillati</taxon>
        <taxon>Bacillota</taxon>
        <taxon>Bacilli</taxon>
        <taxon>Lactobacillales</taxon>
        <taxon>Lactobacillaceae</taxon>
        <taxon>Lactiplantibacillus</taxon>
    </lineage>
</organism>
<name>MIAA_LACPL</name>
<accession>Q88WP5</accession>
<accession>F9UNV7</accession>